<organism>
    <name type="scientific">Listeria monocytogenes serotype 4b (strain CLIP80459)</name>
    <dbReference type="NCBI Taxonomy" id="568819"/>
    <lineage>
        <taxon>Bacteria</taxon>
        <taxon>Bacillati</taxon>
        <taxon>Bacillota</taxon>
        <taxon>Bacilli</taxon>
        <taxon>Bacillales</taxon>
        <taxon>Listeriaceae</taxon>
        <taxon>Listeria</taxon>
    </lineage>
</organism>
<protein>
    <recommendedName>
        <fullName evidence="1">Adenosylcobinamide-GDP ribazoletransferase</fullName>
        <ecNumber evidence="1">2.7.8.26</ecNumber>
    </recommendedName>
    <alternativeName>
        <fullName evidence="1">Cobalamin synthase</fullName>
    </alternativeName>
    <alternativeName>
        <fullName evidence="1">Cobalamin-5'-phosphate synthase</fullName>
    </alternativeName>
</protein>
<gene>
    <name evidence="1" type="primary">cobS</name>
    <name type="ordered locus">Lm4b_01153</name>
</gene>
<comment type="function">
    <text evidence="1">Joins adenosylcobinamide-GDP and alpha-ribazole to generate adenosylcobalamin (Ado-cobalamin). Also synthesizes adenosylcobalamin 5'-phosphate from adenosylcobinamide-GDP and alpha-ribazole 5'-phosphate.</text>
</comment>
<comment type="catalytic activity">
    <reaction evidence="1">
        <text>alpha-ribazole + adenosylcob(III)inamide-GDP = adenosylcob(III)alamin + GMP + H(+)</text>
        <dbReference type="Rhea" id="RHEA:16049"/>
        <dbReference type="ChEBI" id="CHEBI:10329"/>
        <dbReference type="ChEBI" id="CHEBI:15378"/>
        <dbReference type="ChEBI" id="CHEBI:18408"/>
        <dbReference type="ChEBI" id="CHEBI:58115"/>
        <dbReference type="ChEBI" id="CHEBI:60487"/>
        <dbReference type="EC" id="2.7.8.26"/>
    </reaction>
</comment>
<comment type="catalytic activity">
    <reaction evidence="1">
        <text>alpha-ribazole 5'-phosphate + adenosylcob(III)inamide-GDP = adenosylcob(III)alamin 5'-phosphate + GMP + H(+)</text>
        <dbReference type="Rhea" id="RHEA:23560"/>
        <dbReference type="ChEBI" id="CHEBI:15378"/>
        <dbReference type="ChEBI" id="CHEBI:57918"/>
        <dbReference type="ChEBI" id="CHEBI:58115"/>
        <dbReference type="ChEBI" id="CHEBI:60487"/>
        <dbReference type="ChEBI" id="CHEBI:60493"/>
        <dbReference type="EC" id="2.7.8.26"/>
    </reaction>
</comment>
<comment type="cofactor">
    <cofactor evidence="1">
        <name>Mg(2+)</name>
        <dbReference type="ChEBI" id="CHEBI:18420"/>
    </cofactor>
</comment>
<comment type="pathway">
    <text evidence="1">Cofactor biosynthesis; adenosylcobalamin biosynthesis; adenosylcobalamin from cob(II)yrinate a,c-diamide: step 7/7.</text>
</comment>
<comment type="subcellular location">
    <subcellularLocation>
        <location evidence="1">Cell membrane</location>
        <topology evidence="1">Multi-pass membrane protein</topology>
    </subcellularLocation>
</comment>
<comment type="similarity">
    <text evidence="1">Belongs to the CobS family.</text>
</comment>
<name>COBS_LISMC</name>
<dbReference type="EC" id="2.7.8.26" evidence="1"/>
<dbReference type="EMBL" id="FM242711">
    <property type="protein sequence ID" value="CAS04920.1"/>
    <property type="molecule type" value="Genomic_DNA"/>
</dbReference>
<dbReference type="RefSeq" id="WP_003726971.1">
    <property type="nucleotide sequence ID" value="NC_012488.1"/>
</dbReference>
<dbReference type="KEGG" id="lmc:Lm4b_01153"/>
<dbReference type="HOGENOM" id="CLU_057426_1_2_9"/>
<dbReference type="UniPathway" id="UPA00148">
    <property type="reaction ID" value="UER00238"/>
</dbReference>
<dbReference type="GO" id="GO:0005886">
    <property type="term" value="C:plasma membrane"/>
    <property type="evidence" value="ECO:0007669"/>
    <property type="project" value="UniProtKB-SubCell"/>
</dbReference>
<dbReference type="GO" id="GO:0051073">
    <property type="term" value="F:adenosylcobinamide-GDP ribazoletransferase activity"/>
    <property type="evidence" value="ECO:0007669"/>
    <property type="project" value="UniProtKB-UniRule"/>
</dbReference>
<dbReference type="GO" id="GO:0008818">
    <property type="term" value="F:cobalamin 5'-phosphate synthase activity"/>
    <property type="evidence" value="ECO:0007669"/>
    <property type="project" value="UniProtKB-UniRule"/>
</dbReference>
<dbReference type="GO" id="GO:0009236">
    <property type="term" value="P:cobalamin biosynthetic process"/>
    <property type="evidence" value="ECO:0007669"/>
    <property type="project" value="UniProtKB-UniRule"/>
</dbReference>
<dbReference type="HAMAP" id="MF_00719">
    <property type="entry name" value="CobS"/>
    <property type="match status" value="1"/>
</dbReference>
<dbReference type="InterPro" id="IPR003805">
    <property type="entry name" value="CobS"/>
</dbReference>
<dbReference type="NCBIfam" id="TIGR00317">
    <property type="entry name" value="cobS"/>
    <property type="match status" value="1"/>
</dbReference>
<dbReference type="PANTHER" id="PTHR34148">
    <property type="entry name" value="ADENOSYLCOBINAMIDE-GDP RIBAZOLETRANSFERASE"/>
    <property type="match status" value="1"/>
</dbReference>
<dbReference type="PANTHER" id="PTHR34148:SF1">
    <property type="entry name" value="ADENOSYLCOBINAMIDE-GDP RIBAZOLETRANSFERASE"/>
    <property type="match status" value="1"/>
</dbReference>
<dbReference type="Pfam" id="PF02654">
    <property type="entry name" value="CobS"/>
    <property type="match status" value="1"/>
</dbReference>
<feature type="chain" id="PRO_1000212694" description="Adenosylcobinamide-GDP ribazoletransferase">
    <location>
        <begin position="1"/>
        <end position="248"/>
    </location>
</feature>
<feature type="transmembrane region" description="Helical" evidence="1">
    <location>
        <begin position="24"/>
        <end position="44"/>
    </location>
</feature>
<feature type="transmembrane region" description="Helical" evidence="1">
    <location>
        <begin position="70"/>
        <end position="90"/>
    </location>
</feature>
<feature type="transmembrane region" description="Helical" evidence="1">
    <location>
        <begin position="106"/>
        <end position="126"/>
    </location>
</feature>
<feature type="transmembrane region" description="Helical" evidence="1">
    <location>
        <begin position="134"/>
        <end position="154"/>
    </location>
</feature>
<feature type="transmembrane region" description="Helical" evidence="1">
    <location>
        <begin position="157"/>
        <end position="177"/>
    </location>
</feature>
<feature type="transmembrane region" description="Helical" evidence="1">
    <location>
        <begin position="188"/>
        <end position="210"/>
    </location>
</feature>
<feature type="transmembrane region" description="Helical" evidence="1">
    <location>
        <begin position="228"/>
        <end position="248"/>
    </location>
</feature>
<evidence type="ECO:0000255" key="1">
    <source>
        <dbReference type="HAMAP-Rule" id="MF_00719"/>
    </source>
</evidence>
<sequence length="248" mass="27123">MKTLILLIQFFTRIPLPVQINMDEINLKKGSALLPFVGVIIGAWNWLIFTLVALLMPLPVAIIAGLFAEIIITGGFHVDALADTADGLFSSRKRERMLEIMKDSRVGANGVIAICFYFLFYGSLFLSVPDTQQIGWLFFVLPIVAKGVTMLLFAKMTYAGSKAGLGSIFLGVPWWPVVIAQVIVLVALGLFFSYIGVIAYAGVILFTIIYRAFVYKRIGGMNGDTLGAGGQMGQLICLFCLVLLWGLI</sequence>
<keyword id="KW-1003">Cell membrane</keyword>
<keyword id="KW-0169">Cobalamin biosynthesis</keyword>
<keyword id="KW-0460">Magnesium</keyword>
<keyword id="KW-0472">Membrane</keyword>
<keyword id="KW-0808">Transferase</keyword>
<keyword id="KW-0812">Transmembrane</keyword>
<keyword id="KW-1133">Transmembrane helix</keyword>
<proteinExistence type="inferred from homology"/>
<reference key="1">
    <citation type="journal article" date="2012" name="BMC Genomics">
        <title>Comparative genomics and transcriptomics of lineages I, II, and III strains of Listeria monocytogenes.</title>
        <authorList>
            <person name="Hain T."/>
            <person name="Ghai R."/>
            <person name="Billion A."/>
            <person name="Kuenne C.T."/>
            <person name="Steinweg C."/>
            <person name="Izar B."/>
            <person name="Mohamed W."/>
            <person name="Mraheil M."/>
            <person name="Domann E."/>
            <person name="Schaffrath S."/>
            <person name="Karst U."/>
            <person name="Goesmann A."/>
            <person name="Oehm S."/>
            <person name="Puhler A."/>
            <person name="Merkl R."/>
            <person name="Vorwerk S."/>
            <person name="Glaser P."/>
            <person name="Garrido P."/>
            <person name="Rusniok C."/>
            <person name="Buchrieser C."/>
            <person name="Goebel W."/>
            <person name="Chakraborty T."/>
        </authorList>
    </citation>
    <scope>NUCLEOTIDE SEQUENCE [LARGE SCALE GENOMIC DNA]</scope>
    <source>
        <strain>CLIP80459</strain>
    </source>
</reference>
<accession>C1L254</accession>